<keyword id="KW-0067">ATP-binding</keyword>
<keyword id="KW-0436">Ligase</keyword>
<keyword id="KW-0547">Nucleotide-binding</keyword>
<keyword id="KW-0554">One-carbon metabolism</keyword>
<evidence type="ECO:0000255" key="1">
    <source>
        <dbReference type="HAMAP-Rule" id="MF_01543"/>
    </source>
</evidence>
<protein>
    <recommendedName>
        <fullName evidence="1">Formate--tetrahydrofolate ligase</fullName>
        <ecNumber evidence="1">6.3.4.3</ecNumber>
    </recommendedName>
    <alternativeName>
        <fullName evidence="1">Formyltetrahydrofolate synthetase</fullName>
        <shortName evidence="1">FHS</shortName>
        <shortName evidence="1">FTHFS</shortName>
    </alternativeName>
</protein>
<name>FTHS_CLOB6</name>
<reference key="1">
    <citation type="submission" date="2008-05" db="EMBL/GenBank/DDBJ databases">
        <title>Genome sequence of Clostridium botulinum Ba4 strain 657.</title>
        <authorList>
            <person name="Shrivastava S."/>
            <person name="Brown J.L."/>
            <person name="Bruce D."/>
            <person name="Detter C."/>
            <person name="Munk C."/>
            <person name="Smith L.A."/>
            <person name="Smith T.J."/>
            <person name="Sutton G."/>
            <person name="Brettin T.S."/>
        </authorList>
    </citation>
    <scope>NUCLEOTIDE SEQUENCE [LARGE SCALE GENOMIC DNA]</scope>
    <source>
        <strain>657 / Type Ba4</strain>
    </source>
</reference>
<accession>C3KVU4</accession>
<gene>
    <name evidence="1" type="primary">fhs</name>
    <name type="ordered locus">CLJ_B3847</name>
</gene>
<proteinExistence type="inferred from homology"/>
<comment type="catalytic activity">
    <reaction evidence="1">
        <text>(6S)-5,6,7,8-tetrahydrofolate + formate + ATP = (6R)-10-formyltetrahydrofolate + ADP + phosphate</text>
        <dbReference type="Rhea" id="RHEA:20221"/>
        <dbReference type="ChEBI" id="CHEBI:15740"/>
        <dbReference type="ChEBI" id="CHEBI:30616"/>
        <dbReference type="ChEBI" id="CHEBI:43474"/>
        <dbReference type="ChEBI" id="CHEBI:57453"/>
        <dbReference type="ChEBI" id="CHEBI:195366"/>
        <dbReference type="ChEBI" id="CHEBI:456216"/>
        <dbReference type="EC" id="6.3.4.3"/>
    </reaction>
</comment>
<comment type="pathway">
    <text evidence="1">One-carbon metabolism; tetrahydrofolate interconversion.</text>
</comment>
<comment type="similarity">
    <text evidence="1">Belongs to the formate--tetrahydrofolate ligase family.</text>
</comment>
<organism>
    <name type="scientific">Clostridium botulinum (strain 657 / Type Ba4)</name>
    <dbReference type="NCBI Taxonomy" id="515621"/>
    <lineage>
        <taxon>Bacteria</taxon>
        <taxon>Bacillati</taxon>
        <taxon>Bacillota</taxon>
        <taxon>Clostridia</taxon>
        <taxon>Eubacteriales</taxon>
        <taxon>Clostridiaceae</taxon>
        <taxon>Clostridium</taxon>
    </lineage>
</organism>
<sequence>MFKSDIEIAQESKMKNIKNIAEKIGLTEEDIDLYGKYKCKISLDVLKSNKDKKDGKLILVTAINPTPAGEGKSTVTVGLGQALWKKNKKAVIALREPSLGPVFGIKGGAAGGGYSQVVPMEDINLHFTGDMHAITSANNLLAAAIDNHIHQGNILKIDQRRILFKRVMDMNDRALRNVIVALGGKINGFPREDGFMITVASEIMAILCLAEDLMDLKNKMGEILVAYSIEGKPIYCKDLEVQGAMALLMKDAIKPNLVQTLENTPAIIHGGPFANIAHGCNSILGTKMALKLGDYVITEAGFGADLGAEKFFDIKCRKANLKPNCVVIVATVRALKYNGGILKENLKEQNMEALSKGIENLGKHIENVNKFGVPAVVAINKFISDTEEEIEFIKKYCKELGAEVSIAEVWEKGGNGGLELADKVLDTIENKESKFNPIYEETLNIKQKIETIAQEIYGAEGVDYSKEAEKQISEIEKLDLDKKPVCMAKTQYSLSDDAKLLGRPCGFRINVKEVRISNGAGFIVALTGNVMTMPGLPKKPAANNMNVLSDGNIVGLF</sequence>
<feature type="chain" id="PRO_1000215433" description="Formate--tetrahydrofolate ligase">
    <location>
        <begin position="1"/>
        <end position="557"/>
    </location>
</feature>
<feature type="binding site" evidence="1">
    <location>
        <begin position="66"/>
        <end position="73"/>
    </location>
    <ligand>
        <name>ATP</name>
        <dbReference type="ChEBI" id="CHEBI:30616"/>
    </ligand>
</feature>
<dbReference type="EC" id="6.3.4.3" evidence="1"/>
<dbReference type="EMBL" id="CP001083">
    <property type="protein sequence ID" value="ACQ54922.1"/>
    <property type="molecule type" value="Genomic_DNA"/>
</dbReference>
<dbReference type="RefSeq" id="WP_003361711.1">
    <property type="nucleotide sequence ID" value="NC_012658.1"/>
</dbReference>
<dbReference type="SMR" id="C3KVU4"/>
<dbReference type="KEGG" id="cbi:CLJ_B3847"/>
<dbReference type="HOGENOM" id="CLU_003601_3_3_9"/>
<dbReference type="UniPathway" id="UPA00193"/>
<dbReference type="Proteomes" id="UP000002333">
    <property type="component" value="Chromosome"/>
</dbReference>
<dbReference type="GO" id="GO:0005524">
    <property type="term" value="F:ATP binding"/>
    <property type="evidence" value="ECO:0007669"/>
    <property type="project" value="UniProtKB-UniRule"/>
</dbReference>
<dbReference type="GO" id="GO:0004329">
    <property type="term" value="F:formate-tetrahydrofolate ligase activity"/>
    <property type="evidence" value="ECO:0007669"/>
    <property type="project" value="UniProtKB-UniRule"/>
</dbReference>
<dbReference type="GO" id="GO:0035999">
    <property type="term" value="P:tetrahydrofolate interconversion"/>
    <property type="evidence" value="ECO:0007669"/>
    <property type="project" value="UniProtKB-UniRule"/>
</dbReference>
<dbReference type="CDD" id="cd00477">
    <property type="entry name" value="FTHFS"/>
    <property type="match status" value="1"/>
</dbReference>
<dbReference type="FunFam" id="3.30.1510.10:FF:000001">
    <property type="entry name" value="Formate--tetrahydrofolate ligase"/>
    <property type="match status" value="1"/>
</dbReference>
<dbReference type="FunFam" id="3.10.410.10:FF:000001">
    <property type="entry name" value="Putative formate--tetrahydrofolate ligase"/>
    <property type="match status" value="1"/>
</dbReference>
<dbReference type="Gene3D" id="3.30.1510.10">
    <property type="entry name" value="Domain 2, N(10)-formyltetrahydrofolate synthetase"/>
    <property type="match status" value="1"/>
</dbReference>
<dbReference type="Gene3D" id="3.10.410.10">
    <property type="entry name" value="Formyltetrahydrofolate synthetase, domain 3"/>
    <property type="match status" value="1"/>
</dbReference>
<dbReference type="Gene3D" id="3.40.50.300">
    <property type="entry name" value="P-loop containing nucleotide triphosphate hydrolases"/>
    <property type="match status" value="1"/>
</dbReference>
<dbReference type="HAMAP" id="MF_01543">
    <property type="entry name" value="FTHFS"/>
    <property type="match status" value="1"/>
</dbReference>
<dbReference type="InterPro" id="IPR000559">
    <property type="entry name" value="Formate_THF_ligase"/>
</dbReference>
<dbReference type="InterPro" id="IPR020628">
    <property type="entry name" value="Formate_THF_ligase_CS"/>
</dbReference>
<dbReference type="InterPro" id="IPR027417">
    <property type="entry name" value="P-loop_NTPase"/>
</dbReference>
<dbReference type="NCBIfam" id="NF010030">
    <property type="entry name" value="PRK13505.1"/>
    <property type="match status" value="1"/>
</dbReference>
<dbReference type="Pfam" id="PF01268">
    <property type="entry name" value="FTHFS"/>
    <property type="match status" value="1"/>
</dbReference>
<dbReference type="SUPFAM" id="SSF52540">
    <property type="entry name" value="P-loop containing nucleoside triphosphate hydrolases"/>
    <property type="match status" value="1"/>
</dbReference>
<dbReference type="PROSITE" id="PS00721">
    <property type="entry name" value="FTHFS_1"/>
    <property type="match status" value="1"/>
</dbReference>
<dbReference type="PROSITE" id="PS00722">
    <property type="entry name" value="FTHFS_2"/>
    <property type="match status" value="1"/>
</dbReference>